<accession>Q24139</accession>
<accession>Q9VUT9</accession>
<proteinExistence type="evidence at protein level"/>
<keyword id="KW-0002">3D-structure</keyword>
<keyword id="KW-1003">Cell membrane</keyword>
<keyword id="KW-0968">Cytoplasmic vesicle</keyword>
<keyword id="KW-0217">Developmental protein</keyword>
<keyword id="KW-0472">Membrane</keyword>
<keyword id="KW-1185">Reference proteome</keyword>
<keyword id="KW-0812">Transmembrane</keyword>
<keyword id="KW-1133">Transmembrane helix</keyword>
<keyword id="KW-0832">Ubl conjugation</keyword>
<dbReference type="EMBL" id="U35854">
    <property type="protein sequence ID" value="AAC47019.1"/>
    <property type="molecule type" value="mRNA"/>
</dbReference>
<dbReference type="EMBL" id="AE014296">
    <property type="protein sequence ID" value="AAF49584.1"/>
    <property type="molecule type" value="Genomic_DNA"/>
</dbReference>
<dbReference type="RefSeq" id="NP_001261891.1">
    <property type="nucleotide sequence ID" value="NM_001274962.1"/>
</dbReference>
<dbReference type="RefSeq" id="NP_524095.1">
    <property type="nucleotide sequence ID" value="NM_079371.4"/>
</dbReference>
<dbReference type="PDB" id="2EZ5">
    <property type="method" value="NMR"/>
    <property type="chains" value="P=227-237"/>
</dbReference>
<dbReference type="PDBsum" id="2EZ5"/>
<dbReference type="SMR" id="Q24139"/>
<dbReference type="BioGRID" id="65032">
    <property type="interactions" value="16"/>
</dbReference>
<dbReference type="DIP" id="DIP-22799N"/>
<dbReference type="FunCoup" id="Q24139">
    <property type="interactions" value="9"/>
</dbReference>
<dbReference type="IntAct" id="Q24139">
    <property type="interactions" value="2"/>
</dbReference>
<dbReference type="STRING" id="7227.FBpp0305237"/>
<dbReference type="PaxDb" id="7227-FBpp0305237"/>
<dbReference type="DNASU" id="39717"/>
<dbReference type="EnsemblMetazoa" id="FBtr0075579">
    <property type="protein sequence ID" value="FBpp0075332"/>
    <property type="gene ID" value="FBgn0010105"/>
</dbReference>
<dbReference type="EnsemblMetazoa" id="FBtr0333023">
    <property type="protein sequence ID" value="FBpp0305237"/>
    <property type="gene ID" value="FBgn0010105"/>
</dbReference>
<dbReference type="GeneID" id="39717"/>
<dbReference type="KEGG" id="dme:Dmel_CG17943"/>
<dbReference type="UCSC" id="CG17943-RA">
    <property type="organism name" value="d. melanogaster"/>
</dbReference>
<dbReference type="AGR" id="FB:FBgn0010105"/>
<dbReference type="CTD" id="39717"/>
<dbReference type="FlyBase" id="FBgn0010105">
    <property type="gene designation" value="comm"/>
</dbReference>
<dbReference type="VEuPathDB" id="VectorBase:FBgn0010105"/>
<dbReference type="eggNOG" id="ENOG502TFH7">
    <property type="taxonomic scope" value="Eukaryota"/>
</dbReference>
<dbReference type="HOGENOM" id="CLU_732109_0_0_1"/>
<dbReference type="InParanoid" id="Q24139"/>
<dbReference type="OMA" id="CINMPNG"/>
<dbReference type="OrthoDB" id="7757137at2759"/>
<dbReference type="PhylomeDB" id="Q24139"/>
<dbReference type="SignaLink" id="Q24139"/>
<dbReference type="BioGRID-ORCS" id="39717">
    <property type="hits" value="0 hits in 1 CRISPR screen"/>
</dbReference>
<dbReference type="EvolutionaryTrace" id="Q24139"/>
<dbReference type="GenomeRNAi" id="39717"/>
<dbReference type="PRO" id="PR:Q24139"/>
<dbReference type="Proteomes" id="UP000000803">
    <property type="component" value="Chromosome 3L"/>
</dbReference>
<dbReference type="Bgee" id="FBgn0010105">
    <property type="expression patterns" value="Expressed in photoreceptor cell R7 (Drosophila) in insect head and 157 other cell types or tissues"/>
</dbReference>
<dbReference type="ExpressionAtlas" id="Q24139">
    <property type="expression patterns" value="baseline and differential"/>
</dbReference>
<dbReference type="GO" id="GO:0005829">
    <property type="term" value="C:cytosol"/>
    <property type="evidence" value="ECO:0007669"/>
    <property type="project" value="GOC"/>
</dbReference>
<dbReference type="GO" id="GO:0030139">
    <property type="term" value="C:endocytic vesicle"/>
    <property type="evidence" value="ECO:0000314"/>
    <property type="project" value="FlyBase"/>
</dbReference>
<dbReference type="GO" id="GO:0005794">
    <property type="term" value="C:Golgi apparatus"/>
    <property type="evidence" value="ECO:0000314"/>
    <property type="project" value="FlyBase"/>
</dbReference>
<dbReference type="GO" id="GO:0097708">
    <property type="term" value="C:intracellular vesicle"/>
    <property type="evidence" value="ECO:0000314"/>
    <property type="project" value="FlyBase"/>
</dbReference>
<dbReference type="GO" id="GO:0005770">
    <property type="term" value="C:late endosome"/>
    <property type="evidence" value="ECO:0000314"/>
    <property type="project" value="FlyBase"/>
</dbReference>
<dbReference type="GO" id="GO:0031902">
    <property type="term" value="C:late endosome membrane"/>
    <property type="evidence" value="ECO:0000314"/>
    <property type="project" value="FlyBase"/>
</dbReference>
<dbReference type="GO" id="GO:0005765">
    <property type="term" value="C:lysosomal membrane"/>
    <property type="evidence" value="ECO:0000314"/>
    <property type="project" value="FlyBase"/>
</dbReference>
<dbReference type="GO" id="GO:0005886">
    <property type="term" value="C:plasma membrane"/>
    <property type="evidence" value="ECO:0000314"/>
    <property type="project" value="UniProtKB"/>
</dbReference>
<dbReference type="GO" id="GO:0031982">
    <property type="term" value="C:vesicle"/>
    <property type="evidence" value="ECO:0000314"/>
    <property type="project" value="FlyBase"/>
</dbReference>
<dbReference type="GO" id="GO:0140311">
    <property type="term" value="F:protein sequestering activity"/>
    <property type="evidence" value="ECO:0000314"/>
    <property type="project" value="FlyBase"/>
</dbReference>
<dbReference type="GO" id="GO:0048495">
    <property type="term" value="F:Roundabout binding"/>
    <property type="evidence" value="ECO:0000353"/>
    <property type="project" value="FlyBase"/>
</dbReference>
<dbReference type="GO" id="GO:0050699">
    <property type="term" value="F:WW domain binding"/>
    <property type="evidence" value="ECO:0000314"/>
    <property type="project" value="FlyBase"/>
</dbReference>
<dbReference type="GO" id="GO:0007411">
    <property type="term" value="P:axon guidance"/>
    <property type="evidence" value="ECO:0000315"/>
    <property type="project" value="FlyBase"/>
</dbReference>
<dbReference type="GO" id="GO:0016199">
    <property type="term" value="P:axon midline choice point recognition"/>
    <property type="evidence" value="ECO:0000315"/>
    <property type="project" value="UniProtKB"/>
</dbReference>
<dbReference type="GO" id="GO:0070983">
    <property type="term" value="P:dendrite guidance"/>
    <property type="evidence" value="ECO:0000315"/>
    <property type="project" value="FlyBase"/>
</dbReference>
<dbReference type="GO" id="GO:0048813">
    <property type="term" value="P:dendrite morphogenesis"/>
    <property type="evidence" value="ECO:0000315"/>
    <property type="project" value="FlyBase"/>
</dbReference>
<dbReference type="GO" id="GO:0006897">
    <property type="term" value="P:endocytosis"/>
    <property type="evidence" value="ECO:0000304"/>
    <property type="project" value="FlyBase"/>
</dbReference>
<dbReference type="GO" id="GO:0090160">
    <property type="term" value="P:Golgi to lysosome transport"/>
    <property type="evidence" value="ECO:0000314"/>
    <property type="project" value="FlyBase"/>
</dbReference>
<dbReference type="GO" id="GO:0007399">
    <property type="term" value="P:nervous system development"/>
    <property type="evidence" value="ECO:0000304"/>
    <property type="project" value="FlyBase"/>
</dbReference>
<dbReference type="GO" id="GO:0008038">
    <property type="term" value="P:neuron recognition"/>
    <property type="evidence" value="ECO:0000315"/>
    <property type="project" value="FlyBase"/>
</dbReference>
<dbReference type="GO" id="GO:0002092">
    <property type="term" value="P:positive regulation of receptor internalization"/>
    <property type="evidence" value="ECO:0000315"/>
    <property type="project" value="FlyBase"/>
</dbReference>
<dbReference type="GO" id="GO:0031623">
    <property type="term" value="P:receptor internalization"/>
    <property type="evidence" value="ECO:0000314"/>
    <property type="project" value="UniProtKB"/>
</dbReference>
<dbReference type="GO" id="GO:0050773">
    <property type="term" value="P:regulation of dendrite development"/>
    <property type="evidence" value="ECO:0000315"/>
    <property type="project" value="FlyBase"/>
</dbReference>
<dbReference type="GO" id="GO:0007416">
    <property type="term" value="P:synapse assembly"/>
    <property type="evidence" value="ECO:0000315"/>
    <property type="project" value="FlyBase"/>
</dbReference>
<dbReference type="DisProt" id="DP01366"/>
<dbReference type="InterPro" id="IPR031878">
    <property type="entry name" value="Commissureless"/>
</dbReference>
<dbReference type="Pfam" id="PF15957">
    <property type="entry name" value="Comm"/>
    <property type="match status" value="1"/>
</dbReference>
<organism>
    <name type="scientific">Drosophila melanogaster</name>
    <name type="common">Fruit fly</name>
    <dbReference type="NCBI Taxonomy" id="7227"/>
    <lineage>
        <taxon>Eukaryota</taxon>
        <taxon>Metazoa</taxon>
        <taxon>Ecdysozoa</taxon>
        <taxon>Arthropoda</taxon>
        <taxon>Hexapoda</taxon>
        <taxon>Insecta</taxon>
        <taxon>Pterygota</taxon>
        <taxon>Neoptera</taxon>
        <taxon>Endopterygota</taxon>
        <taxon>Diptera</taxon>
        <taxon>Brachycera</taxon>
        <taxon>Muscomorpha</taxon>
        <taxon>Ephydroidea</taxon>
        <taxon>Drosophilidae</taxon>
        <taxon>Drosophila</taxon>
        <taxon>Sophophora</taxon>
    </lineage>
</organism>
<protein>
    <recommendedName>
        <fullName evidence="6">Protein commissureless 1</fullName>
    </recommendedName>
    <alternativeName>
        <fullName evidence="6">Protein commissureless</fullName>
    </alternativeName>
</protein>
<name>COMM_DROME</name>
<gene>
    <name evidence="7" type="primary">comm</name>
    <name evidence="7" type="ORF">CG17943</name>
</gene>
<sequence length="370" mass="40311">MISTTDYPTVETTTTAEELYAEYISAPASSMSPAAIAEHLQQNQITFEIPSAHDLRHIDALNSFNALLQRIGNAAVSYDPAPPSGWSPDGSISTEQLSKSVVLDLADLRDRSEESGESSWWSQIFGDADMHVIINYLWIGVVSSLVILSLVFILFSCYFYRKFRTWKKCNKDIRAQIHAASDSYSSHLVGCDASRLLLHQQMQHPHHRSSEAGFYQIESPPCYTIATGLPSYDEALHHQPRHFAYGMKFVYPSLAAVHHHHHCISNWEKQEPLNKLQKCKLSAAAAVEEDKADSSSSTSASASPSSSESSNLATATPAICINMPSGRQDEEVDNSDSDSAIAVAVAVAQSLQPAAPADDDCASLVVVVAA</sequence>
<feature type="chain" id="PRO_0000090013" description="Protein commissureless 1">
    <location>
        <begin position="1"/>
        <end position="370"/>
    </location>
</feature>
<feature type="topological domain" description="Extracellular" evidence="1">
    <location>
        <begin position="1"/>
        <end position="136"/>
    </location>
</feature>
<feature type="transmembrane region" description="Helical" evidence="1">
    <location>
        <begin position="137"/>
        <end position="157"/>
    </location>
</feature>
<feature type="topological domain" description="Cytoplasmic" evidence="1">
    <location>
        <begin position="158"/>
        <end position="370"/>
    </location>
</feature>
<feature type="region of interest" description="Required for vesicular localization">
    <location>
        <begin position="108"/>
        <end position="131"/>
    </location>
</feature>
<feature type="region of interest" description="Interaction with Nedd4" evidence="5">
    <location>
        <begin position="227"/>
        <end position="237"/>
    </location>
</feature>
<feature type="region of interest" description="Disordered" evidence="2">
    <location>
        <begin position="287"/>
        <end position="312"/>
    </location>
</feature>
<feature type="short sequence motif" description="PY-motif 1" evidence="3">
    <location>
        <begin position="220"/>
        <end position="223"/>
    </location>
</feature>
<feature type="short sequence motif" description="PY-motif 2" evidence="3">
    <location>
        <begin position="229"/>
        <end position="232"/>
    </location>
</feature>
<feature type="compositionally biased region" description="Low complexity" evidence="2">
    <location>
        <begin position="294"/>
        <end position="312"/>
    </location>
</feature>
<feature type="mutagenesis site" description="Abolishes interaction with Nedd4, ubiquitination and internalization; when associated with A-230." evidence="3">
    <original>P</original>
    <variation>A</variation>
    <location>
        <position position="221"/>
    </location>
</feature>
<feature type="mutagenesis site" description="No effect on interaction with Nedd4." evidence="3">
    <original>Y</original>
    <variation>A</variation>
    <location>
        <position position="223"/>
    </location>
</feature>
<feature type="mutagenesis site" description="Abolishes interaction with Nedd4, ubiquitination and internalization; when associated with A-221." evidence="3">
    <original>P</original>
    <variation>A</variation>
    <location>
        <position position="230"/>
    </location>
</feature>
<feature type="mutagenesis site" description="No effect on interaction with Nedd4." evidence="3">
    <original>Y</original>
    <variation>A</variation>
    <location>
        <position position="232"/>
    </location>
</feature>
<comment type="function">
    <text evidence="3 4">Controls axon guidance across the CNS midline by preventing the delivery of Robo to the growth cone.</text>
</comment>
<comment type="subunit">
    <text evidence="3 5">Interacts (probably via PY-motifs) with Nedd4 (via WW2 domain) (PubMed:12165468, PubMed:16531238). Interacts with Robo (PubMed:12165468).</text>
</comment>
<comment type="interaction">
    <interactant intactId="EBI-118294">
        <id>Q24139</id>
    </interactant>
    <interactant intactId="EBI-498113">
        <id>Q9VVI3</id>
        <label>Nedd4</label>
    </interactant>
    <organismsDiffer>false</organismsDiffer>
    <experiments>3</experiments>
</comment>
<comment type="subcellular location">
    <subcellularLocation>
        <location evidence="6">Cytoplasmic vesicle membrane</location>
        <topology evidence="6">Single-pass membrane protein</topology>
    </subcellularLocation>
    <subcellularLocation>
        <location evidence="6">Cell membrane</location>
        <topology evidence="6">Single-pass membrane protein</topology>
    </subcellularLocation>
</comment>
<comment type="domain">
    <text evidence="3">The cytoplasmic domain is required for function in axon guidance.</text>
</comment>
<comment type="PTM">
    <text evidence="3 4">Ubiquitinated by Nedd4; which promotes endocytosis of the comm/robo complex and comm proteasomal degradation (PubMed:12165468). Not ubiquitinated by Nedd4 (PubMed:15657595).</text>
</comment>
<comment type="similarity">
    <text evidence="6">Belongs to the commissureless family.</text>
</comment>
<reference key="1">
    <citation type="journal article" date="1996" name="Neuron">
        <title>Commissureless controls growth cone guidance across the CNS midline in Drosophila and encodes a novel membrane protein.</title>
        <authorList>
            <person name="Tear G."/>
            <person name="Harris R."/>
            <person name="Sutaria S."/>
            <person name="Kilomanski K."/>
            <person name="Goodman C.S."/>
            <person name="Seeger M.A."/>
        </authorList>
    </citation>
    <scope>NUCLEOTIDE SEQUENCE [MRNA]</scope>
</reference>
<reference key="2">
    <citation type="journal article" date="2000" name="Science">
        <title>The genome sequence of Drosophila melanogaster.</title>
        <authorList>
            <person name="Adams M.D."/>
            <person name="Celniker S.E."/>
            <person name="Holt R.A."/>
            <person name="Evans C.A."/>
            <person name="Gocayne J.D."/>
            <person name="Amanatides P.G."/>
            <person name="Scherer S.E."/>
            <person name="Li P.W."/>
            <person name="Hoskins R.A."/>
            <person name="Galle R.F."/>
            <person name="George R.A."/>
            <person name="Lewis S.E."/>
            <person name="Richards S."/>
            <person name="Ashburner M."/>
            <person name="Henderson S.N."/>
            <person name="Sutton G.G."/>
            <person name="Wortman J.R."/>
            <person name="Yandell M.D."/>
            <person name="Zhang Q."/>
            <person name="Chen L.X."/>
            <person name="Brandon R.C."/>
            <person name="Rogers Y.-H.C."/>
            <person name="Blazej R.G."/>
            <person name="Champe M."/>
            <person name="Pfeiffer B.D."/>
            <person name="Wan K.H."/>
            <person name="Doyle C."/>
            <person name="Baxter E.G."/>
            <person name="Helt G."/>
            <person name="Nelson C.R."/>
            <person name="Miklos G.L.G."/>
            <person name="Abril J.F."/>
            <person name="Agbayani A."/>
            <person name="An H.-J."/>
            <person name="Andrews-Pfannkoch C."/>
            <person name="Baldwin D."/>
            <person name="Ballew R.M."/>
            <person name="Basu A."/>
            <person name="Baxendale J."/>
            <person name="Bayraktaroglu L."/>
            <person name="Beasley E.M."/>
            <person name="Beeson K.Y."/>
            <person name="Benos P.V."/>
            <person name="Berman B.P."/>
            <person name="Bhandari D."/>
            <person name="Bolshakov S."/>
            <person name="Borkova D."/>
            <person name="Botchan M.R."/>
            <person name="Bouck J."/>
            <person name="Brokstein P."/>
            <person name="Brottier P."/>
            <person name="Burtis K.C."/>
            <person name="Busam D.A."/>
            <person name="Butler H."/>
            <person name="Cadieu E."/>
            <person name="Center A."/>
            <person name="Chandra I."/>
            <person name="Cherry J.M."/>
            <person name="Cawley S."/>
            <person name="Dahlke C."/>
            <person name="Davenport L.B."/>
            <person name="Davies P."/>
            <person name="de Pablos B."/>
            <person name="Delcher A."/>
            <person name="Deng Z."/>
            <person name="Mays A.D."/>
            <person name="Dew I."/>
            <person name="Dietz S.M."/>
            <person name="Dodson K."/>
            <person name="Doup L.E."/>
            <person name="Downes M."/>
            <person name="Dugan-Rocha S."/>
            <person name="Dunkov B.C."/>
            <person name="Dunn P."/>
            <person name="Durbin K.J."/>
            <person name="Evangelista C.C."/>
            <person name="Ferraz C."/>
            <person name="Ferriera S."/>
            <person name="Fleischmann W."/>
            <person name="Fosler C."/>
            <person name="Gabrielian A.E."/>
            <person name="Garg N.S."/>
            <person name="Gelbart W.M."/>
            <person name="Glasser K."/>
            <person name="Glodek A."/>
            <person name="Gong F."/>
            <person name="Gorrell J.H."/>
            <person name="Gu Z."/>
            <person name="Guan P."/>
            <person name="Harris M."/>
            <person name="Harris N.L."/>
            <person name="Harvey D.A."/>
            <person name="Heiman T.J."/>
            <person name="Hernandez J.R."/>
            <person name="Houck J."/>
            <person name="Hostin D."/>
            <person name="Houston K.A."/>
            <person name="Howland T.J."/>
            <person name="Wei M.-H."/>
            <person name="Ibegwam C."/>
            <person name="Jalali M."/>
            <person name="Kalush F."/>
            <person name="Karpen G.H."/>
            <person name="Ke Z."/>
            <person name="Kennison J.A."/>
            <person name="Ketchum K.A."/>
            <person name="Kimmel B.E."/>
            <person name="Kodira C.D."/>
            <person name="Kraft C.L."/>
            <person name="Kravitz S."/>
            <person name="Kulp D."/>
            <person name="Lai Z."/>
            <person name="Lasko P."/>
            <person name="Lei Y."/>
            <person name="Levitsky A.A."/>
            <person name="Li J.H."/>
            <person name="Li Z."/>
            <person name="Liang Y."/>
            <person name="Lin X."/>
            <person name="Liu X."/>
            <person name="Mattei B."/>
            <person name="McIntosh T.C."/>
            <person name="McLeod M.P."/>
            <person name="McPherson D."/>
            <person name="Merkulov G."/>
            <person name="Milshina N.V."/>
            <person name="Mobarry C."/>
            <person name="Morris J."/>
            <person name="Moshrefi A."/>
            <person name="Mount S.M."/>
            <person name="Moy M."/>
            <person name="Murphy B."/>
            <person name="Murphy L."/>
            <person name="Muzny D.M."/>
            <person name="Nelson D.L."/>
            <person name="Nelson D.R."/>
            <person name="Nelson K.A."/>
            <person name="Nixon K."/>
            <person name="Nusskern D.R."/>
            <person name="Pacleb J.M."/>
            <person name="Palazzolo M."/>
            <person name="Pittman G.S."/>
            <person name="Pan S."/>
            <person name="Pollard J."/>
            <person name="Puri V."/>
            <person name="Reese M.G."/>
            <person name="Reinert K."/>
            <person name="Remington K."/>
            <person name="Saunders R.D.C."/>
            <person name="Scheeler F."/>
            <person name="Shen H."/>
            <person name="Shue B.C."/>
            <person name="Siden-Kiamos I."/>
            <person name="Simpson M."/>
            <person name="Skupski M.P."/>
            <person name="Smith T.J."/>
            <person name="Spier E."/>
            <person name="Spradling A.C."/>
            <person name="Stapleton M."/>
            <person name="Strong R."/>
            <person name="Sun E."/>
            <person name="Svirskas R."/>
            <person name="Tector C."/>
            <person name="Turner R."/>
            <person name="Venter E."/>
            <person name="Wang A.H."/>
            <person name="Wang X."/>
            <person name="Wang Z.-Y."/>
            <person name="Wassarman D.A."/>
            <person name="Weinstock G.M."/>
            <person name="Weissenbach J."/>
            <person name="Williams S.M."/>
            <person name="Woodage T."/>
            <person name="Worley K.C."/>
            <person name="Wu D."/>
            <person name="Yang S."/>
            <person name="Yao Q.A."/>
            <person name="Ye J."/>
            <person name="Yeh R.-F."/>
            <person name="Zaveri J.S."/>
            <person name="Zhan M."/>
            <person name="Zhang G."/>
            <person name="Zhao Q."/>
            <person name="Zheng L."/>
            <person name="Zheng X.H."/>
            <person name="Zhong F.N."/>
            <person name="Zhong W."/>
            <person name="Zhou X."/>
            <person name="Zhu S.C."/>
            <person name="Zhu X."/>
            <person name="Smith H.O."/>
            <person name="Gibbs R.A."/>
            <person name="Myers E.W."/>
            <person name="Rubin G.M."/>
            <person name="Venter J.C."/>
        </authorList>
    </citation>
    <scope>NUCLEOTIDE SEQUENCE [LARGE SCALE GENOMIC DNA]</scope>
    <source>
        <strain>Berkeley</strain>
    </source>
</reference>
<reference key="3">
    <citation type="journal article" date="2002" name="Genome Biol.">
        <title>Annotation of the Drosophila melanogaster euchromatic genome: a systematic review.</title>
        <authorList>
            <person name="Misra S."/>
            <person name="Crosby M.A."/>
            <person name="Mungall C.J."/>
            <person name="Matthews B.B."/>
            <person name="Campbell K.S."/>
            <person name="Hradecky P."/>
            <person name="Huang Y."/>
            <person name="Kaminker J.S."/>
            <person name="Millburn G.H."/>
            <person name="Prochnik S.E."/>
            <person name="Smith C.D."/>
            <person name="Tupy J.L."/>
            <person name="Whitfield E.J."/>
            <person name="Bayraktaroglu L."/>
            <person name="Berman B.P."/>
            <person name="Bettencourt B.R."/>
            <person name="Celniker S.E."/>
            <person name="de Grey A.D.N.J."/>
            <person name="Drysdale R.A."/>
            <person name="Harris N.L."/>
            <person name="Richter J."/>
            <person name="Russo S."/>
            <person name="Schroeder A.J."/>
            <person name="Shu S.Q."/>
            <person name="Stapleton M."/>
            <person name="Yamada C."/>
            <person name="Ashburner M."/>
            <person name="Gelbart W.M."/>
            <person name="Rubin G.M."/>
            <person name="Lewis S.E."/>
        </authorList>
    </citation>
    <scope>GENOME REANNOTATION</scope>
    <source>
        <strain>Berkeley</strain>
    </source>
</reference>
<reference key="4">
    <citation type="journal article" date="2002" name="Neuron">
        <title>Drosophila Nedd4, a ubiquitin ligase, is recruited by Commissureless to control cell surface levels of the roundabout receptor.</title>
        <authorList>
            <person name="Myat A."/>
            <person name="Henry P."/>
            <person name="McCabe V."/>
            <person name="Flintoft L."/>
            <person name="Rotin D."/>
            <person name="Tear G."/>
        </authorList>
    </citation>
    <scope>FUNCTION</scope>
    <scope>INTERACTION WITH NEDD4 AND ROBO</scope>
    <scope>DOMAIN</scope>
    <scope>UBIQUITINATION</scope>
    <scope>MUTAGENESIS OF PRO-221; TYR-223; PRO-230 AND TYR-232</scope>
    <scope>SUBCELLULAR LOCATION</scope>
</reference>
<reference key="5">
    <citation type="journal article" date="2005" name="Nat. Neurosci.">
        <title>Comm function in commissural axon guidance: cell-autonomous sorting of Robo in vivo.</title>
        <authorList>
            <person name="Keleman K."/>
            <person name="Ribeiro C."/>
            <person name="Dickson B.J."/>
        </authorList>
    </citation>
    <scope>FUNCTION</scope>
    <scope>LACK OF UBIQUITINATION</scope>
    <scope>SUBCELLULAR LOCATION</scope>
</reference>
<reference key="6">
    <citation type="journal article" date="2006" name="Structure">
        <title>Structural determinants for high-affinity binding in a Nedd4 WW3* domain-Comm PY motif complex.</title>
        <authorList>
            <person name="Kanelis V."/>
            <person name="Bruce M.C."/>
            <person name="Skrynnikov N.R."/>
            <person name="Rotin D."/>
            <person name="Forman-Kay J.D."/>
        </authorList>
    </citation>
    <scope>STRUCTURE BY NMR OF 227-237 IN COMPLEX WITH NEDD4 WW2 DOMAIN</scope>
</reference>
<evidence type="ECO:0000255" key="1"/>
<evidence type="ECO:0000256" key="2">
    <source>
        <dbReference type="SAM" id="MobiDB-lite"/>
    </source>
</evidence>
<evidence type="ECO:0000269" key="3">
    <source>
    </source>
</evidence>
<evidence type="ECO:0000269" key="4">
    <source>
    </source>
</evidence>
<evidence type="ECO:0000269" key="5">
    <source>
    </source>
</evidence>
<evidence type="ECO:0000305" key="6"/>
<evidence type="ECO:0000312" key="7">
    <source>
        <dbReference type="FlyBase" id="FBgn0010105"/>
    </source>
</evidence>